<accession>Q0RS64</accession>
<organism>
    <name type="scientific">Frankia alni (strain DSM 45986 / CECT 9034 / ACN14a)</name>
    <dbReference type="NCBI Taxonomy" id="326424"/>
    <lineage>
        <taxon>Bacteria</taxon>
        <taxon>Bacillati</taxon>
        <taxon>Actinomycetota</taxon>
        <taxon>Actinomycetes</taxon>
        <taxon>Frankiales</taxon>
        <taxon>Frankiaceae</taxon>
        <taxon>Frankia</taxon>
    </lineage>
</organism>
<dbReference type="EC" id="2.3.1.189" evidence="1"/>
<dbReference type="EMBL" id="CT573213">
    <property type="protein sequence ID" value="CAJ59601.1"/>
    <property type="molecule type" value="Genomic_DNA"/>
</dbReference>
<dbReference type="RefSeq" id="WP_011602165.1">
    <property type="nucleotide sequence ID" value="NC_008278.1"/>
</dbReference>
<dbReference type="SMR" id="Q0RS64"/>
<dbReference type="STRING" id="326424.FRAAL0935"/>
<dbReference type="KEGG" id="fal:FRAAL0935"/>
<dbReference type="eggNOG" id="COG0456">
    <property type="taxonomic scope" value="Bacteria"/>
</dbReference>
<dbReference type="HOGENOM" id="CLU_068014_0_0_11"/>
<dbReference type="OrthoDB" id="3208058at2"/>
<dbReference type="Proteomes" id="UP000000657">
    <property type="component" value="Chromosome"/>
</dbReference>
<dbReference type="GO" id="GO:0035447">
    <property type="term" value="F:mycothiol synthase activity"/>
    <property type="evidence" value="ECO:0007669"/>
    <property type="project" value="UniProtKB-UniRule"/>
</dbReference>
<dbReference type="GO" id="GO:0010125">
    <property type="term" value="P:mycothiol biosynthetic process"/>
    <property type="evidence" value="ECO:0007669"/>
    <property type="project" value="UniProtKB-UniRule"/>
</dbReference>
<dbReference type="Gene3D" id="3.40.630.30">
    <property type="match status" value="1"/>
</dbReference>
<dbReference type="HAMAP" id="MF_01698">
    <property type="entry name" value="MshD"/>
    <property type="match status" value="1"/>
</dbReference>
<dbReference type="InterPro" id="IPR016181">
    <property type="entry name" value="Acyl_CoA_acyltransferase"/>
</dbReference>
<dbReference type="InterPro" id="IPR050832">
    <property type="entry name" value="Bact_Acetyltransf"/>
</dbReference>
<dbReference type="InterPro" id="IPR000182">
    <property type="entry name" value="GNAT_dom"/>
</dbReference>
<dbReference type="InterPro" id="IPR017813">
    <property type="entry name" value="Mycothiol_AcTrfase"/>
</dbReference>
<dbReference type="NCBIfam" id="TIGR03448">
    <property type="entry name" value="mycothiol_MshD"/>
    <property type="match status" value="1"/>
</dbReference>
<dbReference type="PANTHER" id="PTHR43877">
    <property type="entry name" value="AMINOALKYLPHOSPHONATE N-ACETYLTRANSFERASE-RELATED-RELATED"/>
    <property type="match status" value="1"/>
</dbReference>
<dbReference type="Pfam" id="PF00583">
    <property type="entry name" value="Acetyltransf_1"/>
    <property type="match status" value="1"/>
</dbReference>
<dbReference type="Pfam" id="PF13508">
    <property type="entry name" value="Acetyltransf_7"/>
    <property type="match status" value="1"/>
</dbReference>
<dbReference type="PIRSF" id="PIRSF021524">
    <property type="entry name" value="MSH_acetyltransferase"/>
    <property type="match status" value="1"/>
</dbReference>
<dbReference type="SUPFAM" id="SSF55729">
    <property type="entry name" value="Acyl-CoA N-acyltransferases (Nat)"/>
    <property type="match status" value="1"/>
</dbReference>
<dbReference type="PROSITE" id="PS51186">
    <property type="entry name" value="GNAT"/>
    <property type="match status" value="2"/>
</dbReference>
<protein>
    <recommendedName>
        <fullName evidence="1">Mycothiol acetyltransferase</fullName>
        <shortName evidence="1">MSH acetyltransferase</shortName>
        <ecNumber evidence="1">2.3.1.189</ecNumber>
    </recommendedName>
    <alternativeName>
        <fullName evidence="1">Mycothiol synthase</fullName>
    </alternativeName>
</protein>
<evidence type="ECO:0000255" key="1">
    <source>
        <dbReference type="HAMAP-Rule" id="MF_01698"/>
    </source>
</evidence>
<feature type="chain" id="PRO_0000400255" description="Mycothiol acetyltransferase">
    <location>
        <begin position="1"/>
        <end position="333"/>
    </location>
</feature>
<feature type="domain" description="N-acetyltransferase 1" evidence="1">
    <location>
        <begin position="18"/>
        <end position="170"/>
    </location>
</feature>
<feature type="domain" description="N-acetyltransferase 2" evidence="1">
    <location>
        <begin position="176"/>
        <end position="333"/>
    </location>
</feature>
<feature type="binding site" evidence="1">
    <location>
        <position position="46"/>
    </location>
    <ligand>
        <name>1D-myo-inositol 2-(L-cysteinylamino)-2-deoxy-alpha-D-glucopyranoside</name>
        <dbReference type="ChEBI" id="CHEBI:58887"/>
    </ligand>
</feature>
<feature type="binding site" evidence="1">
    <location>
        <begin position="98"/>
        <end position="100"/>
    </location>
    <ligand>
        <name>acetyl-CoA</name>
        <dbReference type="ChEBI" id="CHEBI:57288"/>
        <label>1</label>
    </ligand>
</feature>
<feature type="binding site" evidence="1">
    <location>
        <position position="203"/>
    </location>
    <ligand>
        <name>1D-myo-inositol 2-(L-cysteinylamino)-2-deoxy-alpha-D-glucopyranoside</name>
        <dbReference type="ChEBI" id="CHEBI:58887"/>
    </ligand>
</feature>
<feature type="binding site" evidence="1">
    <location>
        <position position="242"/>
    </location>
    <ligand>
        <name>1D-myo-inositol 2-(L-cysteinylamino)-2-deoxy-alpha-D-glucopyranoside</name>
        <dbReference type="ChEBI" id="CHEBI:58887"/>
    </ligand>
</feature>
<feature type="binding site" evidence="1">
    <location>
        <position position="261"/>
    </location>
    <ligand>
        <name>1D-myo-inositol 2-(L-cysteinylamino)-2-deoxy-alpha-D-glucopyranoside</name>
        <dbReference type="ChEBI" id="CHEBI:58887"/>
    </ligand>
</feature>
<feature type="binding site" evidence="1">
    <location>
        <begin position="265"/>
        <end position="267"/>
    </location>
    <ligand>
        <name>acetyl-CoA</name>
        <dbReference type="ChEBI" id="CHEBI:57288"/>
        <label>2</label>
    </ligand>
</feature>
<feature type="binding site" evidence="1">
    <location>
        <begin position="272"/>
        <end position="278"/>
    </location>
    <ligand>
        <name>acetyl-CoA</name>
        <dbReference type="ChEBI" id="CHEBI:57288"/>
        <label>2</label>
    </ligand>
</feature>
<feature type="binding site" evidence="1">
    <location>
        <position position="299"/>
    </location>
    <ligand>
        <name>1D-myo-inositol 2-(L-cysteinylamino)-2-deoxy-alpha-D-glucopyranoside</name>
        <dbReference type="ChEBI" id="CHEBI:58887"/>
    </ligand>
</feature>
<feature type="binding site" evidence="1">
    <location>
        <begin position="304"/>
        <end position="309"/>
    </location>
    <ligand>
        <name>acetyl-CoA</name>
        <dbReference type="ChEBI" id="CHEBI:57288"/>
        <label>2</label>
    </ligand>
</feature>
<gene>
    <name evidence="1" type="primary">mshD</name>
    <name type="ordered locus">FRAAL0935</name>
</gene>
<keyword id="KW-0012">Acyltransferase</keyword>
<keyword id="KW-1185">Reference proteome</keyword>
<keyword id="KW-0677">Repeat</keyword>
<keyword id="KW-0808">Transferase</keyword>
<comment type="function">
    <text evidence="1">Catalyzes the transfer of acetyl from acetyl-CoA to desacetylmycothiol (Cys-GlcN-Ins) to form mycothiol.</text>
</comment>
<comment type="catalytic activity">
    <reaction evidence="1">
        <text>1D-myo-inositol 2-(L-cysteinylamino)-2-deoxy-alpha-D-glucopyranoside + acetyl-CoA = mycothiol + CoA + H(+)</text>
        <dbReference type="Rhea" id="RHEA:26172"/>
        <dbReference type="ChEBI" id="CHEBI:15378"/>
        <dbReference type="ChEBI" id="CHEBI:16768"/>
        <dbReference type="ChEBI" id="CHEBI:57287"/>
        <dbReference type="ChEBI" id="CHEBI:57288"/>
        <dbReference type="ChEBI" id="CHEBI:58887"/>
        <dbReference type="EC" id="2.3.1.189"/>
    </reaction>
</comment>
<comment type="subunit">
    <text evidence="1">Monomer.</text>
</comment>
<comment type="similarity">
    <text evidence="1">Belongs to the acetyltransferase family. MshD subfamily.</text>
</comment>
<sequence>MAEGPYGRPVTASLTWQPTLSAADVDDIVSLLATAERADGTGPVSEDVRLTLRPDQRVGAARHLLAVSATGVEASGPRRPIVGYAHLGGALDSRQAEIVVDPGHRGLGIGRALATALTEALGDPPARLDVWAHGDLPPAAALAARLGFARTRVLFQLRRPLGAVAPLPEPQLPAGVTVRAFVPGRDDEAWLAVNAAAFADHPEQGRWTLDDLALRRAEPWFDPRGFFVAERDGQLVGFHWTKIHEVDETPPPGTRPGPIGEVYVVGVLPGAGGAGLGRALTLIGLRHLQAEGLAAVLLYVDEDNERAVRMYTGLDFTVHTRDVSYHWRGAAAD</sequence>
<reference key="1">
    <citation type="journal article" date="2007" name="Genome Res.">
        <title>Genome characteristics of facultatively symbiotic Frankia sp. strains reflect host range and host plant biogeography.</title>
        <authorList>
            <person name="Normand P."/>
            <person name="Lapierre P."/>
            <person name="Tisa L.S."/>
            <person name="Gogarten J.P."/>
            <person name="Alloisio N."/>
            <person name="Bagnarol E."/>
            <person name="Bassi C.A."/>
            <person name="Berry A.M."/>
            <person name="Bickhart D.M."/>
            <person name="Choisne N."/>
            <person name="Couloux A."/>
            <person name="Cournoyer B."/>
            <person name="Cruveiller S."/>
            <person name="Daubin V."/>
            <person name="Demange N."/>
            <person name="Francino M.P."/>
            <person name="Goltsman E."/>
            <person name="Huang Y."/>
            <person name="Kopp O.R."/>
            <person name="Labarre L."/>
            <person name="Lapidus A."/>
            <person name="Lavire C."/>
            <person name="Marechal J."/>
            <person name="Martinez M."/>
            <person name="Mastronunzio J.E."/>
            <person name="Mullin B.C."/>
            <person name="Niemann J."/>
            <person name="Pujic P."/>
            <person name="Rawnsley T."/>
            <person name="Rouy Z."/>
            <person name="Schenowitz C."/>
            <person name="Sellstedt A."/>
            <person name="Tavares F."/>
            <person name="Tomkins J.P."/>
            <person name="Vallenet D."/>
            <person name="Valverde C."/>
            <person name="Wall L.G."/>
            <person name="Wang Y."/>
            <person name="Medigue C."/>
            <person name="Benson D.R."/>
        </authorList>
    </citation>
    <scope>NUCLEOTIDE SEQUENCE [LARGE SCALE GENOMIC DNA]</scope>
    <source>
        <strain>DSM 45986 / CECT 9034 / ACN14a</strain>
    </source>
</reference>
<name>MSHD_FRAAA</name>
<proteinExistence type="inferred from homology"/>